<feature type="chain" id="PRO_0000344356" description="Small ribosomal subunit protein uS7cz/uS7cy">
    <location>
        <begin position="1"/>
        <end position="155"/>
    </location>
</feature>
<proteinExistence type="inferred from homology"/>
<comment type="function">
    <text evidence="1">One of the primary rRNA binding proteins, it binds directly to 16S rRNA where it nucleates assembly of the head domain of the 30S subunit.</text>
</comment>
<comment type="subunit">
    <text evidence="1">Part of the 30S ribosomal subunit.</text>
</comment>
<comment type="subcellular location">
    <subcellularLocation>
        <location>Plastid</location>
        <location>Chloroplast</location>
    </subcellularLocation>
</comment>
<comment type="similarity">
    <text evidence="3">Belongs to the universal ribosomal protein uS7 family.</text>
</comment>
<gene>
    <name type="primary">rps7-A</name>
</gene>
<gene>
    <name type="primary">rps7-B</name>
</gene>
<geneLocation type="chloroplast"/>
<keyword id="KW-0150">Chloroplast</keyword>
<keyword id="KW-0934">Plastid</keyword>
<keyword id="KW-0687">Ribonucleoprotein</keyword>
<keyword id="KW-0689">Ribosomal protein</keyword>
<keyword id="KW-0694">RNA-binding</keyword>
<keyword id="KW-0699">rRNA-binding</keyword>
<evidence type="ECO:0000250" key="1"/>
<evidence type="ECO:0000255" key="2">
    <source>
        <dbReference type="HAMAP-Rule" id="MF_00480"/>
    </source>
</evidence>
<evidence type="ECO:0000305" key="3"/>
<accession>A4QJX6</accession>
<protein>
    <recommendedName>
        <fullName evidence="2">Small ribosomal subunit protein uS7cz/uS7cy</fullName>
    </recommendedName>
    <alternativeName>
        <fullName>30S ribosomal protein S7, chloroplastic</fullName>
    </alternativeName>
</protein>
<name>RR7_OLIPU</name>
<reference key="1">
    <citation type="submission" date="2007-03" db="EMBL/GenBank/DDBJ databases">
        <title>Sequence analysis of Arabidopsis pumila JS2 chloroplast DNA.</title>
        <authorList>
            <person name="Hosouchi T."/>
            <person name="Tsuruoka H."/>
            <person name="Kotani H."/>
        </authorList>
    </citation>
    <scope>NUCLEOTIDE SEQUENCE [LARGE SCALE GENOMIC DNA]</scope>
</reference>
<dbReference type="EMBL" id="AP009368">
    <property type="protein sequence ID" value="BAF49984.1"/>
    <property type="molecule type" value="Genomic_DNA"/>
</dbReference>
<dbReference type="EMBL" id="AP009368">
    <property type="protein sequence ID" value="BAF49999.1"/>
    <property type="molecule type" value="Genomic_DNA"/>
</dbReference>
<dbReference type="SMR" id="A4QJX6"/>
<dbReference type="GO" id="GO:0009507">
    <property type="term" value="C:chloroplast"/>
    <property type="evidence" value="ECO:0007669"/>
    <property type="project" value="UniProtKB-SubCell"/>
</dbReference>
<dbReference type="GO" id="GO:0015935">
    <property type="term" value="C:small ribosomal subunit"/>
    <property type="evidence" value="ECO:0007669"/>
    <property type="project" value="InterPro"/>
</dbReference>
<dbReference type="GO" id="GO:0019843">
    <property type="term" value="F:rRNA binding"/>
    <property type="evidence" value="ECO:0007669"/>
    <property type="project" value="UniProtKB-UniRule"/>
</dbReference>
<dbReference type="GO" id="GO:0003735">
    <property type="term" value="F:structural constituent of ribosome"/>
    <property type="evidence" value="ECO:0007669"/>
    <property type="project" value="InterPro"/>
</dbReference>
<dbReference type="GO" id="GO:0006412">
    <property type="term" value="P:translation"/>
    <property type="evidence" value="ECO:0007669"/>
    <property type="project" value="UniProtKB-UniRule"/>
</dbReference>
<dbReference type="CDD" id="cd14871">
    <property type="entry name" value="uS7_Chloroplast"/>
    <property type="match status" value="1"/>
</dbReference>
<dbReference type="FunFam" id="1.10.455.10:FF:000001">
    <property type="entry name" value="30S ribosomal protein S7"/>
    <property type="match status" value="1"/>
</dbReference>
<dbReference type="Gene3D" id="1.10.455.10">
    <property type="entry name" value="Ribosomal protein S7 domain"/>
    <property type="match status" value="1"/>
</dbReference>
<dbReference type="HAMAP" id="MF_00480_B">
    <property type="entry name" value="Ribosomal_uS7_B"/>
    <property type="match status" value="1"/>
</dbReference>
<dbReference type="InterPro" id="IPR000235">
    <property type="entry name" value="Ribosomal_uS7"/>
</dbReference>
<dbReference type="InterPro" id="IPR005717">
    <property type="entry name" value="Ribosomal_uS7_bac/org-type"/>
</dbReference>
<dbReference type="InterPro" id="IPR020606">
    <property type="entry name" value="Ribosomal_uS7_CS"/>
</dbReference>
<dbReference type="InterPro" id="IPR023798">
    <property type="entry name" value="Ribosomal_uS7_dom"/>
</dbReference>
<dbReference type="InterPro" id="IPR036823">
    <property type="entry name" value="Ribosomal_uS7_dom_sf"/>
</dbReference>
<dbReference type="NCBIfam" id="TIGR01029">
    <property type="entry name" value="rpsG_bact"/>
    <property type="match status" value="1"/>
</dbReference>
<dbReference type="PANTHER" id="PTHR11205">
    <property type="entry name" value="RIBOSOMAL PROTEIN S7"/>
    <property type="match status" value="1"/>
</dbReference>
<dbReference type="Pfam" id="PF00177">
    <property type="entry name" value="Ribosomal_S7"/>
    <property type="match status" value="1"/>
</dbReference>
<dbReference type="PIRSF" id="PIRSF002122">
    <property type="entry name" value="RPS7p_RPS7a_RPS5e_RPS7o"/>
    <property type="match status" value="1"/>
</dbReference>
<dbReference type="SUPFAM" id="SSF47973">
    <property type="entry name" value="Ribosomal protein S7"/>
    <property type="match status" value="1"/>
</dbReference>
<dbReference type="PROSITE" id="PS00052">
    <property type="entry name" value="RIBOSOMAL_S7"/>
    <property type="match status" value="1"/>
</dbReference>
<organism>
    <name type="scientific">Olimarabidopsis pumila</name>
    <name type="common">Dwarf rocket</name>
    <name type="synonym">Arabidopsis griffithiana</name>
    <dbReference type="NCBI Taxonomy" id="74718"/>
    <lineage>
        <taxon>Eukaryota</taxon>
        <taxon>Viridiplantae</taxon>
        <taxon>Streptophyta</taxon>
        <taxon>Embryophyta</taxon>
        <taxon>Tracheophyta</taxon>
        <taxon>Spermatophyta</taxon>
        <taxon>Magnoliopsida</taxon>
        <taxon>eudicotyledons</taxon>
        <taxon>Gunneridae</taxon>
        <taxon>Pentapetalae</taxon>
        <taxon>rosids</taxon>
        <taxon>malvids</taxon>
        <taxon>Brassicales</taxon>
        <taxon>Brassicaceae</taxon>
        <taxon>Alyssopsideae</taxon>
        <taxon>Olimarabidopsis</taxon>
    </lineage>
</organism>
<sequence length="155" mass="17357">MSRRGTAEEKTAKSDPIYRNRLVNMLVNRILKHGKKSLAYQIIYRALKKIQQKTETNPLSVLRQAIRGVTPDIAVKARRVGGSTHQVPIEIGSTQGKALAIRWLLGASRKRPGRNMAFKLSSELVDAAKGSGDAIRKKEETHRMAEANRAFAHFR</sequence>